<comment type="function">
    <text evidence="1">DNA-dependent RNA polymerase (RNAP) catalyzes the transcription of DNA into RNA using the four ribonucleoside triphosphates as substrates. This subunit is involved in DNA promoter recognition.</text>
</comment>
<comment type="catalytic activity">
    <reaction evidence="2">
        <text>RNA(n) + a ribonucleoside 5'-triphosphate = RNA(n+1) + diphosphate</text>
        <dbReference type="Rhea" id="RHEA:21248"/>
        <dbReference type="Rhea" id="RHEA-COMP:14527"/>
        <dbReference type="Rhea" id="RHEA-COMP:17342"/>
        <dbReference type="ChEBI" id="CHEBI:33019"/>
        <dbReference type="ChEBI" id="CHEBI:61557"/>
        <dbReference type="ChEBI" id="CHEBI:140395"/>
        <dbReference type="EC" id="2.7.7.6"/>
    </reaction>
</comment>
<comment type="cofactor">
    <cofactor evidence="1">
        <name>Zn(2+)</name>
        <dbReference type="ChEBI" id="CHEBI:29105"/>
    </cofactor>
    <text evidence="1">Binds 1 Zn(2+) per subunit.</text>
</comment>
<comment type="subunit">
    <text evidence="1">Part of the RNA polymerase complex.</text>
</comment>
<comment type="subcellular location">
    <subcellularLocation>
        <location evidence="1">Cytoplasm</location>
    </subcellularLocation>
</comment>
<comment type="similarity">
    <text evidence="5">Belongs to the RNA polymerase beta chain family.</text>
</comment>
<accession>Q03587</accession>
<dbReference type="EC" id="2.7.7.6" evidence="2"/>
<dbReference type="EMBL" id="X68198">
    <property type="protein sequence ID" value="CAA48280.1"/>
    <property type="molecule type" value="Genomic_DNA"/>
</dbReference>
<dbReference type="EMBL" id="AL445064">
    <property type="protein sequence ID" value="CAC11534.1"/>
    <property type="molecule type" value="Genomic_DNA"/>
</dbReference>
<dbReference type="PIR" id="S26722">
    <property type="entry name" value="S26722"/>
</dbReference>
<dbReference type="RefSeq" id="WP_010900819.1">
    <property type="nucleotide sequence ID" value="NC_002578.1"/>
</dbReference>
<dbReference type="SMR" id="Q03587"/>
<dbReference type="FunCoup" id="Q03587">
    <property type="interactions" value="139"/>
</dbReference>
<dbReference type="STRING" id="273075.gene:9571610"/>
<dbReference type="PaxDb" id="273075-Ta0390"/>
<dbReference type="EnsemblBacteria" id="CAC11534">
    <property type="protein sequence ID" value="CAC11534"/>
    <property type="gene ID" value="CAC11534"/>
</dbReference>
<dbReference type="KEGG" id="tac:Ta0390"/>
<dbReference type="eggNOG" id="arCOG01762">
    <property type="taxonomic scope" value="Archaea"/>
</dbReference>
<dbReference type="HOGENOM" id="CLU_000524_5_0_2"/>
<dbReference type="InParanoid" id="Q03587"/>
<dbReference type="OrthoDB" id="6009at2157"/>
<dbReference type="Proteomes" id="UP000001024">
    <property type="component" value="Chromosome"/>
</dbReference>
<dbReference type="GO" id="GO:0005737">
    <property type="term" value="C:cytoplasm"/>
    <property type="evidence" value="ECO:0007669"/>
    <property type="project" value="UniProtKB-SubCell"/>
</dbReference>
<dbReference type="GO" id="GO:0000428">
    <property type="term" value="C:DNA-directed RNA polymerase complex"/>
    <property type="evidence" value="ECO:0007669"/>
    <property type="project" value="UniProtKB-KW"/>
</dbReference>
<dbReference type="GO" id="GO:0003677">
    <property type="term" value="F:DNA binding"/>
    <property type="evidence" value="ECO:0007669"/>
    <property type="project" value="UniProtKB-KW"/>
</dbReference>
<dbReference type="GO" id="GO:0003899">
    <property type="term" value="F:DNA-directed RNA polymerase activity"/>
    <property type="evidence" value="ECO:0007669"/>
    <property type="project" value="UniProtKB-EC"/>
</dbReference>
<dbReference type="GO" id="GO:0032549">
    <property type="term" value="F:ribonucleoside binding"/>
    <property type="evidence" value="ECO:0007669"/>
    <property type="project" value="InterPro"/>
</dbReference>
<dbReference type="GO" id="GO:0008270">
    <property type="term" value="F:zinc ion binding"/>
    <property type="evidence" value="ECO:0007669"/>
    <property type="project" value="InterPro"/>
</dbReference>
<dbReference type="GO" id="GO:0006351">
    <property type="term" value="P:DNA-templated transcription"/>
    <property type="evidence" value="ECO:0007669"/>
    <property type="project" value="InterPro"/>
</dbReference>
<dbReference type="CDD" id="cd00653">
    <property type="entry name" value="RNA_pol_B_RPB2"/>
    <property type="match status" value="1"/>
</dbReference>
<dbReference type="FunFam" id="2.40.270.10:FF:000011">
    <property type="entry name" value="DNA-directed RNA polymerase subunit beta"/>
    <property type="match status" value="1"/>
</dbReference>
<dbReference type="Gene3D" id="2.40.50.150">
    <property type="match status" value="1"/>
</dbReference>
<dbReference type="Gene3D" id="3.90.1100.10">
    <property type="match status" value="2"/>
</dbReference>
<dbReference type="Gene3D" id="2.40.270.10">
    <property type="entry name" value="DNA-directed RNA polymerase, subunit 2, domain 6"/>
    <property type="match status" value="1"/>
</dbReference>
<dbReference type="Gene3D" id="3.90.1800.10">
    <property type="entry name" value="RNA polymerase alpha subunit dimerisation domain"/>
    <property type="match status" value="1"/>
</dbReference>
<dbReference type="Gene3D" id="3.90.1110.10">
    <property type="entry name" value="RNA polymerase Rpb2, domain 2"/>
    <property type="match status" value="1"/>
</dbReference>
<dbReference type="InterPro" id="IPR015712">
    <property type="entry name" value="DNA-dir_RNA_pol_su2"/>
</dbReference>
<dbReference type="InterPro" id="IPR007120">
    <property type="entry name" value="DNA-dir_RNAP_su2_dom"/>
</dbReference>
<dbReference type="InterPro" id="IPR037033">
    <property type="entry name" value="DNA-dir_RNAP_su2_hyb_sf"/>
</dbReference>
<dbReference type="InterPro" id="IPR007121">
    <property type="entry name" value="RNA_pol_bsu_CS"/>
</dbReference>
<dbReference type="InterPro" id="IPR007644">
    <property type="entry name" value="RNA_pol_bsu_protrusion"/>
</dbReference>
<dbReference type="InterPro" id="IPR007642">
    <property type="entry name" value="RNA_pol_Rpb2_2"/>
</dbReference>
<dbReference type="InterPro" id="IPR037034">
    <property type="entry name" value="RNA_pol_Rpb2_2_sf"/>
</dbReference>
<dbReference type="InterPro" id="IPR007645">
    <property type="entry name" value="RNA_pol_Rpb2_3"/>
</dbReference>
<dbReference type="InterPro" id="IPR007646">
    <property type="entry name" value="RNA_pol_Rpb2_4"/>
</dbReference>
<dbReference type="InterPro" id="IPR007647">
    <property type="entry name" value="RNA_pol_Rpb2_5"/>
</dbReference>
<dbReference type="InterPro" id="IPR007641">
    <property type="entry name" value="RNA_pol_Rpb2_7"/>
</dbReference>
<dbReference type="InterPro" id="IPR014724">
    <property type="entry name" value="RNA_pol_RPB2_OB-fold"/>
</dbReference>
<dbReference type="InterPro" id="IPR019969">
    <property type="entry name" value="RNAP_Rpo2"/>
</dbReference>
<dbReference type="NCBIfam" id="NF006335">
    <property type="entry name" value="PRK08565.1"/>
    <property type="match status" value="1"/>
</dbReference>
<dbReference type="NCBIfam" id="NF007175">
    <property type="entry name" value="PRK09606.1"/>
    <property type="match status" value="1"/>
</dbReference>
<dbReference type="NCBIfam" id="TIGR03670">
    <property type="entry name" value="rpoB_arch"/>
    <property type="match status" value="1"/>
</dbReference>
<dbReference type="PANTHER" id="PTHR20856">
    <property type="entry name" value="DNA-DIRECTED RNA POLYMERASE I SUBUNIT 2"/>
    <property type="match status" value="1"/>
</dbReference>
<dbReference type="Pfam" id="PF04563">
    <property type="entry name" value="RNA_pol_Rpb2_1"/>
    <property type="match status" value="1"/>
</dbReference>
<dbReference type="Pfam" id="PF04561">
    <property type="entry name" value="RNA_pol_Rpb2_2"/>
    <property type="match status" value="1"/>
</dbReference>
<dbReference type="Pfam" id="PF04565">
    <property type="entry name" value="RNA_pol_Rpb2_3"/>
    <property type="match status" value="1"/>
</dbReference>
<dbReference type="Pfam" id="PF04566">
    <property type="entry name" value="RNA_pol_Rpb2_4"/>
    <property type="match status" value="1"/>
</dbReference>
<dbReference type="Pfam" id="PF04567">
    <property type="entry name" value="RNA_pol_Rpb2_5"/>
    <property type="match status" value="1"/>
</dbReference>
<dbReference type="Pfam" id="PF00562">
    <property type="entry name" value="RNA_pol_Rpb2_6"/>
    <property type="match status" value="1"/>
</dbReference>
<dbReference type="Pfam" id="PF04560">
    <property type="entry name" value="RNA_pol_Rpb2_7"/>
    <property type="match status" value="1"/>
</dbReference>
<dbReference type="SUPFAM" id="SSF64484">
    <property type="entry name" value="beta and beta-prime subunits of DNA dependent RNA-polymerase"/>
    <property type="match status" value="1"/>
</dbReference>
<dbReference type="PROSITE" id="PS01166">
    <property type="entry name" value="RNA_POL_BETA"/>
    <property type="match status" value="1"/>
</dbReference>
<protein>
    <recommendedName>
        <fullName evidence="5">DNA-directed RNA polymerase subunit Rpo2</fullName>
        <ecNumber evidence="2">2.7.7.6</ecNumber>
    </recommendedName>
    <alternativeName>
        <fullName>DNA-directed RNA polymerase subunit B</fullName>
    </alternativeName>
</protein>
<name>RPO2_THEAC</name>
<keyword id="KW-0963">Cytoplasm</keyword>
<keyword id="KW-0238">DNA-binding</keyword>
<keyword id="KW-0240">DNA-directed RNA polymerase</keyword>
<keyword id="KW-0479">Metal-binding</keyword>
<keyword id="KW-0548">Nucleotidyltransferase</keyword>
<keyword id="KW-1185">Reference proteome</keyword>
<keyword id="KW-0804">Transcription</keyword>
<keyword id="KW-0808">Transferase</keyword>
<keyword id="KW-0862">Zinc</keyword>
<evidence type="ECO:0000250" key="1">
    <source>
        <dbReference type="UniProtKB" id="B8YB55"/>
    </source>
</evidence>
<evidence type="ECO:0000250" key="2">
    <source>
        <dbReference type="UniProtKB" id="P11513"/>
    </source>
</evidence>
<evidence type="ECO:0000256" key="3">
    <source>
        <dbReference type="SAM" id="MobiDB-lite"/>
    </source>
</evidence>
<evidence type="ECO:0000303" key="4">
    <source>
    </source>
</evidence>
<evidence type="ECO:0000305" key="5"/>
<reference key="1">
    <citation type="journal article" date="1992" name="Nucleic Acids Res.">
        <title>Nucleotide sequence of the genes encoding the subunits H, B, A' and A'' of the DNA-dependent RNA polymerase and the initiator tRNA from Thermoplasma acidophilum.</title>
        <authorList>
            <person name="Klenk H.-P."/>
            <person name="Renner O."/>
            <person name="Schwass V."/>
            <person name="Zillig W."/>
        </authorList>
    </citation>
    <scope>NUCLEOTIDE SEQUENCE [GENOMIC DNA]</scope>
    <source>
        <strain>ATCC 25905 / DSM 1728 / JCM 9062 / NBRC 15155 / AMRC-C165</strain>
    </source>
</reference>
<reference key="2">
    <citation type="journal article" date="2000" name="Nature">
        <title>The genome sequence of the thermoacidophilic scavenger Thermoplasma acidophilum.</title>
        <authorList>
            <person name="Ruepp A."/>
            <person name="Graml W."/>
            <person name="Santos-Martinez M.-L."/>
            <person name="Koretke K.K."/>
            <person name="Volker C."/>
            <person name="Mewes H.-W."/>
            <person name="Frishman D."/>
            <person name="Stocker S."/>
            <person name="Lupas A.N."/>
            <person name="Baumeister W."/>
        </authorList>
    </citation>
    <scope>NUCLEOTIDE SEQUENCE [LARGE SCALE GENOMIC DNA]</scope>
    <source>
        <strain>ATCC 25905 / DSM 1728 / JCM 9062 / NBRC 15155 / AMRC-C165</strain>
    </source>
</reference>
<proteinExistence type="inferred from homology"/>
<feature type="chain" id="PRO_0000048098" description="DNA-directed RNA polymerase subunit Rpo2">
    <location>
        <begin position="1"/>
        <end position="1195"/>
    </location>
</feature>
<feature type="region of interest" description="Disordered" evidence="3">
    <location>
        <begin position="894"/>
        <end position="914"/>
    </location>
</feature>
<feature type="compositionally biased region" description="Basic and acidic residues" evidence="3">
    <location>
        <begin position="894"/>
        <end position="909"/>
    </location>
</feature>
<feature type="binding site" evidence="1">
    <location>
        <position position="1135"/>
    </location>
    <ligand>
        <name>Zn(2+)</name>
        <dbReference type="ChEBI" id="CHEBI:29105"/>
    </ligand>
</feature>
<feature type="binding site" evidence="1">
    <location>
        <position position="1140"/>
    </location>
    <ligand>
        <name>Zn(2+)</name>
        <dbReference type="ChEBI" id="CHEBI:29105"/>
    </ligand>
</feature>
<feature type="binding site" evidence="1">
    <location>
        <position position="1155"/>
    </location>
    <ligand>
        <name>Zn(2+)</name>
        <dbReference type="ChEBI" id="CHEBI:29105"/>
    </ligand>
</feature>
<feature type="binding site" evidence="5">
    <location>
        <position position="1158"/>
    </location>
    <ligand>
        <name>Zn(2+)</name>
        <dbReference type="ChEBI" id="CHEBI:29105"/>
    </ligand>
</feature>
<sequence length="1195" mass="134690">MKEIVDAYFKKYGIVNHQLDSMNSFYATPDNPNSVMQQIVDETKVSDDADPGYFVLDPAKTGGHDIRIYYGRVRENGHYVGEQTIFIGKPEIKEASGASNQITPNEARLRDLNYLAPVTLKLRIVEDGIEKGSEIIKVGDLPVMVRSKICTLSEENLDQYIEKNNGPIGLSRREKLQYVGEDPDDPGGYFIIGGSERVIVSLEDLAPNKIMVEWEDRYESKVEVSKVFSQRGGFRALTSMEKGTDGTINVSIPSVAGTVPLVILMKALGLERDVDVHDAIASVPEMEPIIYSNIEDSKNPKVLPPNGVNTTEDAISYLEKRFAAGQAKEFRDKKISQMLDHSLLPHLGDSPSDRIRKAIYLGRMARSLLELSLGIRKEDDKDHLANKRIKLAGDLMDELFRSAFQSVMKDLKYQLEKTYNRKRGIKIRPAVRQDLLTQRVLHAMSTGNWIGGRTGVSQLLDRVSNLSTISHLRRIISPLTRTQPHFEARDLHPTQWGRICPNETPEGQNCGLVKNAALLINVTQGIDPDSVMEILKGMDVREVLEESPKKGRVYLNGDFIGYHDDPRYLVSRIREERRSGRMSDEVNVRYDDNTNEVIVNSDRGRLRRPLLILKDGKTVLDRTMIERLKHGEISFEDLVKQGAIEWLDAEEEEDTYVAVYAYDIPEKCPHCNSYLYRSMVDWVNPGESEITLECGFCHQRFNVPSKLSKENTHLEIDPAMILGVVASIIPYPEHNSSPRITIASAMAKQSLGFAQSNVRIRPDTRGHLLHYPQVPLVRTRVMDYIHYDRRPAGQNFVVAVLSYEGYNIQDALVINKAAIERGLGRSTFFRTYSAEERRYPGGQEDKFEIPTHDIIGARAEEYYKNLDDSGIIFPEAYVEGSDVLIGKTSPPRFLEEGEERLGPQRRRESSVTMRPNESGYVDNVFLTVSESNSRVVKIKVRSERIPELGDKFASRHGQKGVVGLVVPQEDMPFTEDGIIPDLIFNPHSIPSRMTVGHILEMIGGKIASRTGRFIDGTIFSGEPEKSLRDALVKYGFRKSSTEVMYDGITGRRFKADIFVGVIYYQKLHHMVAGKFHARSRGPVQILTRQPTEGRSRQGGLRFGEMERDTLIAHGAAMVIKDRLLDQSDGTVLYVCGNPSCGHIAIYDRRKGTLRCPVCGNTGNIYPIETSYAFKLMRDELISLGVVMRLMLGDMK</sequence>
<gene>
    <name evidence="5" type="primary">rpo2</name>
    <name evidence="4" type="synonym">rpoB</name>
    <name type="ordered locus">Ta0390</name>
</gene>
<organism>
    <name type="scientific">Thermoplasma acidophilum (strain ATCC 25905 / DSM 1728 / JCM 9062 / NBRC 15155 / AMRC-C165)</name>
    <dbReference type="NCBI Taxonomy" id="273075"/>
    <lineage>
        <taxon>Archaea</taxon>
        <taxon>Methanobacteriati</taxon>
        <taxon>Thermoplasmatota</taxon>
        <taxon>Thermoplasmata</taxon>
        <taxon>Thermoplasmatales</taxon>
        <taxon>Thermoplasmataceae</taxon>
        <taxon>Thermoplasma</taxon>
    </lineage>
</organism>